<protein>
    <recommendedName>
        <fullName>Somatostatin receptor type 3</fullName>
        <shortName>SS-3-R</shortName>
        <shortName>SS3-R</shortName>
        <shortName>SS3R</shortName>
    </recommendedName>
    <alternativeName>
        <fullName>SSR-28</fullName>
    </alternativeName>
</protein>
<feature type="chain" id="PRO_0000070126" description="Somatostatin receptor type 3">
    <location>
        <begin position="1"/>
        <end position="428"/>
    </location>
</feature>
<feature type="topological domain" description="Extracellular" evidence="1">
    <location>
        <begin position="1"/>
        <end position="45"/>
    </location>
</feature>
<feature type="transmembrane region" description="Helical; Name=1" evidence="1">
    <location>
        <begin position="46"/>
        <end position="71"/>
    </location>
</feature>
<feature type="topological domain" description="Cytoplasmic" evidence="1">
    <location>
        <begin position="72"/>
        <end position="81"/>
    </location>
</feature>
<feature type="transmembrane region" description="Helical; Name=2" evidence="1">
    <location>
        <begin position="82"/>
        <end position="103"/>
    </location>
</feature>
<feature type="topological domain" description="Extracellular" evidence="1">
    <location>
        <begin position="104"/>
        <end position="118"/>
    </location>
</feature>
<feature type="transmembrane region" description="Helical; Name=3" evidence="1">
    <location>
        <begin position="119"/>
        <end position="140"/>
    </location>
</feature>
<feature type="topological domain" description="Cytoplasmic" evidence="1">
    <location>
        <begin position="141"/>
        <end position="162"/>
    </location>
</feature>
<feature type="transmembrane region" description="Helical; Name=4" evidence="1">
    <location>
        <begin position="163"/>
        <end position="182"/>
    </location>
</feature>
<feature type="topological domain" description="Extracellular" evidence="1">
    <location>
        <begin position="183"/>
        <end position="206"/>
    </location>
</feature>
<feature type="transmembrane region" description="Helical; Name=5" evidence="1">
    <location>
        <begin position="207"/>
        <end position="232"/>
    </location>
</feature>
<feature type="topological domain" description="Cytoplasmic" evidence="1">
    <location>
        <begin position="233"/>
        <end position="266"/>
    </location>
</feature>
<feature type="transmembrane region" description="Helical; Name=6" evidence="1">
    <location>
        <begin position="267"/>
        <end position="288"/>
    </location>
</feature>
<feature type="topological domain" description="Extracellular" evidence="1">
    <location>
        <begin position="289"/>
        <end position="302"/>
    </location>
</feature>
<feature type="transmembrane region" description="Helical; Name=7" evidence="1">
    <location>
        <begin position="303"/>
        <end position="325"/>
    </location>
</feature>
<feature type="topological domain" description="Cytoplasmic" evidence="1">
    <location>
        <begin position="326"/>
        <end position="428"/>
    </location>
</feature>
<feature type="region of interest" description="Disordered" evidence="3">
    <location>
        <begin position="343"/>
        <end position="428"/>
    </location>
</feature>
<feature type="compositionally biased region" description="Acidic residues" evidence="3">
    <location>
        <begin position="357"/>
        <end position="370"/>
    </location>
</feature>
<feature type="compositionally biased region" description="Polar residues" evidence="3">
    <location>
        <begin position="385"/>
        <end position="412"/>
    </location>
</feature>
<feature type="modified residue" description="Phosphoserine" evidence="7">
    <location>
        <position position="341"/>
    </location>
</feature>
<feature type="modified residue" description="Phosphoserine" evidence="7">
    <location>
        <position position="346"/>
    </location>
</feature>
<feature type="modified residue" description="Phosphoserine" evidence="7">
    <location>
        <position position="351"/>
    </location>
</feature>
<feature type="modified residue" description="Phosphothreonine" evidence="6">
    <location>
        <position position="357"/>
    </location>
</feature>
<feature type="glycosylation site" description="N-linked (GlcNAc...) asparagine" evidence="1">
    <location>
        <position position="18"/>
    </location>
</feature>
<feature type="glycosylation site" description="N-linked (GlcNAc...) asparagine" evidence="1">
    <location>
        <position position="31"/>
    </location>
</feature>
<feature type="disulfide bond" evidence="2">
    <location>
        <begin position="117"/>
        <end position="192"/>
    </location>
</feature>
<feature type="mutagenesis site" description="Impaired internalization after somatostatin binding." evidence="6">
    <original>S</original>
    <variation>A</variation>
    <location>
        <position position="341"/>
    </location>
</feature>
<feature type="mutagenesis site" description="Impaired internalization after somatostatin binding." evidence="6">
    <original>S</original>
    <variation>A</variation>
    <location>
        <position position="346"/>
    </location>
</feature>
<feature type="mutagenesis site" description="Impaired internalization after somatostatin binding." evidence="6">
    <original>S</original>
    <variation>A</variation>
    <location>
        <position position="351"/>
    </location>
</feature>
<feature type="mutagenesis site" description="Reduced basal and somatostatin-induced phosphorylation. Impaired internalization after somatostatin binding." evidence="6">
    <original>T</original>
    <variation>A</variation>
    <location>
        <position position="357"/>
    </location>
</feature>
<gene>
    <name type="primary">Sstr3</name>
</gene>
<comment type="function">
    <text evidence="4 5">Receptor for somatostatin-14 and -28. This receptor is coupled via pertussis toxin sensitive G proteins to inhibition of adenylyl cyclase.</text>
</comment>
<comment type="subunit">
    <text evidence="4">Homodimer and heterodimer with SSTR2. Heterodimerization with SSTR2 inactivates SSTR3 receptor function.</text>
</comment>
<comment type="subcellular location">
    <subcellularLocation>
        <location evidence="4 6">Cell membrane</location>
        <topology evidence="4 6">Multi-pass membrane protein</topology>
    </subcellularLocation>
    <text>Internalized into endoplasmic vesicles upon somatostatin-stimulation.</text>
</comment>
<comment type="tissue specificity">
    <text evidence="5">Densely expressed in cerebellum and at moderate levels in the amygdala, cortex, striatum, spleen, liver and pituitary.</text>
</comment>
<comment type="PTM">
    <text evidence="6">Phosphorylated. Phosphorylation increases upon somatostatin binding.</text>
</comment>
<comment type="similarity">
    <text evidence="2">Belongs to the G-protein coupled receptor 1 family.</text>
</comment>
<proteinExistence type="evidence at protein level"/>
<dbReference type="EMBL" id="X63574">
    <property type="protein sequence ID" value="CAA45130.1"/>
    <property type="molecule type" value="mRNA"/>
</dbReference>
<dbReference type="PIR" id="S30508">
    <property type="entry name" value="S30508"/>
</dbReference>
<dbReference type="RefSeq" id="NP_598206.1">
    <property type="nucleotide sequence ID" value="NM_133522.2"/>
</dbReference>
<dbReference type="RefSeq" id="XP_006242028.1">
    <property type="nucleotide sequence ID" value="XM_006241966.2"/>
</dbReference>
<dbReference type="RefSeq" id="XP_063119017.1">
    <property type="nucleotide sequence ID" value="XM_063262947.1"/>
</dbReference>
<dbReference type="SMR" id="P30936"/>
<dbReference type="BioGRID" id="251061">
    <property type="interactions" value="1"/>
</dbReference>
<dbReference type="CORUM" id="P30936"/>
<dbReference type="FunCoup" id="P30936">
    <property type="interactions" value="131"/>
</dbReference>
<dbReference type="STRING" id="10116.ENSRNOP00000009612"/>
<dbReference type="BindingDB" id="P30936"/>
<dbReference type="ChEMBL" id="CHEMBL3340"/>
<dbReference type="DrugCentral" id="P30936"/>
<dbReference type="GuidetoPHARMACOLOGY" id="357"/>
<dbReference type="GlyCosmos" id="P30936">
    <property type="glycosylation" value="2 sites, No reported glycans"/>
</dbReference>
<dbReference type="GlyGen" id="P30936">
    <property type="glycosylation" value="3 sites"/>
</dbReference>
<dbReference type="iPTMnet" id="P30936"/>
<dbReference type="PhosphoSitePlus" id="P30936"/>
<dbReference type="PaxDb" id="10116-ENSRNOP00000009612"/>
<dbReference type="Ensembl" id="ENSRNOT00000009612.4">
    <property type="protein sequence ID" value="ENSRNOP00000009612.2"/>
    <property type="gene ID" value="ENSRNOG00000007332.4"/>
</dbReference>
<dbReference type="GeneID" id="171044"/>
<dbReference type="KEGG" id="rno:171044"/>
<dbReference type="UCSC" id="RGD:620308">
    <property type="organism name" value="rat"/>
</dbReference>
<dbReference type="AGR" id="RGD:620308"/>
<dbReference type="CTD" id="6753"/>
<dbReference type="RGD" id="620308">
    <property type="gene designation" value="Sstr3"/>
</dbReference>
<dbReference type="eggNOG" id="KOG3656">
    <property type="taxonomic scope" value="Eukaryota"/>
</dbReference>
<dbReference type="GeneTree" id="ENSGT00940000162038"/>
<dbReference type="HOGENOM" id="CLU_009579_8_1_1"/>
<dbReference type="InParanoid" id="P30936"/>
<dbReference type="OMA" id="EVPACPP"/>
<dbReference type="OrthoDB" id="6076970at2759"/>
<dbReference type="PhylomeDB" id="P30936"/>
<dbReference type="TreeFam" id="TF315737"/>
<dbReference type="Reactome" id="R-RNO-375276">
    <property type="pathway name" value="Peptide ligand-binding receptors"/>
</dbReference>
<dbReference type="Reactome" id="R-RNO-418594">
    <property type="pathway name" value="G alpha (i) signalling events"/>
</dbReference>
<dbReference type="Reactome" id="R-RNO-5620922">
    <property type="pathway name" value="BBSome-mediated cargo-targeting to cilium"/>
</dbReference>
<dbReference type="PRO" id="PR:P30936"/>
<dbReference type="Proteomes" id="UP000002494">
    <property type="component" value="Chromosome 7"/>
</dbReference>
<dbReference type="Bgee" id="ENSRNOG00000007332">
    <property type="expression patterns" value="Expressed in thymus and 13 other cell types or tissues"/>
</dbReference>
<dbReference type="GO" id="GO:0060170">
    <property type="term" value="C:ciliary membrane"/>
    <property type="evidence" value="ECO:0000266"/>
    <property type="project" value="RGD"/>
</dbReference>
<dbReference type="GO" id="GO:0005929">
    <property type="term" value="C:cilium"/>
    <property type="evidence" value="ECO:0000266"/>
    <property type="project" value="RGD"/>
</dbReference>
<dbReference type="GO" id="GO:0043005">
    <property type="term" value="C:neuron projection"/>
    <property type="evidence" value="ECO:0000266"/>
    <property type="project" value="RGD"/>
</dbReference>
<dbReference type="GO" id="GO:0097730">
    <property type="term" value="C:non-motile cilium"/>
    <property type="evidence" value="ECO:0000266"/>
    <property type="project" value="RGD"/>
</dbReference>
<dbReference type="GO" id="GO:0005886">
    <property type="term" value="C:plasma membrane"/>
    <property type="evidence" value="ECO:0000266"/>
    <property type="project" value="RGD"/>
</dbReference>
<dbReference type="GO" id="GO:0004930">
    <property type="term" value="F:G protein-coupled receptor activity"/>
    <property type="evidence" value="ECO:0000318"/>
    <property type="project" value="GO_Central"/>
</dbReference>
<dbReference type="GO" id="GO:0042923">
    <property type="term" value="F:neuropeptide binding"/>
    <property type="evidence" value="ECO:0000318"/>
    <property type="project" value="GO_Central"/>
</dbReference>
<dbReference type="GO" id="GO:0005102">
    <property type="term" value="F:signaling receptor binding"/>
    <property type="evidence" value="ECO:0000266"/>
    <property type="project" value="RGD"/>
</dbReference>
<dbReference type="GO" id="GO:0004994">
    <property type="term" value="F:somatostatin receptor activity"/>
    <property type="evidence" value="ECO:0007669"/>
    <property type="project" value="InterPro"/>
</dbReference>
<dbReference type="GO" id="GO:0071392">
    <property type="term" value="P:cellular response to estradiol stimulus"/>
    <property type="evidence" value="ECO:0000270"/>
    <property type="project" value="RGD"/>
</dbReference>
<dbReference type="GO" id="GO:0071385">
    <property type="term" value="P:cellular response to glucocorticoid stimulus"/>
    <property type="evidence" value="ECO:0000270"/>
    <property type="project" value="RGD"/>
</dbReference>
<dbReference type="GO" id="GO:0021549">
    <property type="term" value="P:cerebellum development"/>
    <property type="evidence" value="ECO:0000270"/>
    <property type="project" value="RGD"/>
</dbReference>
<dbReference type="GO" id="GO:0030900">
    <property type="term" value="P:forebrain development"/>
    <property type="evidence" value="ECO:0000270"/>
    <property type="project" value="RGD"/>
</dbReference>
<dbReference type="GO" id="GO:0060125">
    <property type="term" value="P:negative regulation of growth hormone secretion"/>
    <property type="evidence" value="ECO:0000266"/>
    <property type="project" value="RGD"/>
</dbReference>
<dbReference type="GO" id="GO:0007218">
    <property type="term" value="P:neuropeptide signaling pathway"/>
    <property type="evidence" value="ECO:0000318"/>
    <property type="project" value="GO_Central"/>
</dbReference>
<dbReference type="GO" id="GO:0042594">
    <property type="term" value="P:response to starvation"/>
    <property type="evidence" value="ECO:0000270"/>
    <property type="project" value="RGD"/>
</dbReference>
<dbReference type="GO" id="GO:0007283">
    <property type="term" value="P:spermatogenesis"/>
    <property type="evidence" value="ECO:0000270"/>
    <property type="project" value="RGD"/>
</dbReference>
<dbReference type="FunFam" id="1.20.1070.10:FF:000039">
    <property type="entry name" value="somatostatin receptor type 2"/>
    <property type="match status" value="1"/>
</dbReference>
<dbReference type="Gene3D" id="1.20.1070.10">
    <property type="entry name" value="Rhodopsin 7-helix transmembrane proteins"/>
    <property type="match status" value="1"/>
</dbReference>
<dbReference type="InterPro" id="IPR000276">
    <property type="entry name" value="GPCR_Rhodpsn"/>
</dbReference>
<dbReference type="InterPro" id="IPR017452">
    <property type="entry name" value="GPCR_Rhodpsn_7TM"/>
</dbReference>
<dbReference type="InterPro" id="IPR000586">
    <property type="entry name" value="Somatstn_rcpt"/>
</dbReference>
<dbReference type="InterPro" id="IPR001856">
    <property type="entry name" value="Somatstn_rcpt_3"/>
</dbReference>
<dbReference type="PANTHER" id="PTHR24229">
    <property type="entry name" value="NEUROPEPTIDES RECEPTOR"/>
    <property type="match status" value="1"/>
</dbReference>
<dbReference type="PANTHER" id="PTHR24229:SF42">
    <property type="entry name" value="SOMATOSTATIN RECEPTOR TYPE 3"/>
    <property type="match status" value="1"/>
</dbReference>
<dbReference type="Pfam" id="PF00001">
    <property type="entry name" value="7tm_1"/>
    <property type="match status" value="1"/>
</dbReference>
<dbReference type="PRINTS" id="PR00237">
    <property type="entry name" value="GPCRRHODOPSN"/>
</dbReference>
<dbReference type="PRINTS" id="PR00246">
    <property type="entry name" value="SOMATOSTATNR"/>
</dbReference>
<dbReference type="PRINTS" id="PR00589">
    <property type="entry name" value="SOMATOSTTN3R"/>
</dbReference>
<dbReference type="SMART" id="SM01381">
    <property type="entry name" value="7TM_GPCR_Srsx"/>
    <property type="match status" value="1"/>
</dbReference>
<dbReference type="SUPFAM" id="SSF81321">
    <property type="entry name" value="Family A G protein-coupled receptor-like"/>
    <property type="match status" value="1"/>
</dbReference>
<dbReference type="PROSITE" id="PS00237">
    <property type="entry name" value="G_PROTEIN_RECEP_F1_1"/>
    <property type="match status" value="1"/>
</dbReference>
<dbReference type="PROSITE" id="PS50262">
    <property type="entry name" value="G_PROTEIN_RECEP_F1_2"/>
    <property type="match status" value="1"/>
</dbReference>
<sequence length="428" mass="47151">MAAVTYPSSVPTTLDPGNASSAWPLDTSLGNASAGTSLAGLAVSGILISLVYLVVCVVGLLGNSLVIYVVLRHTSSPSVTSVYILNLALADELFMLGLPFLAAQNALSYWPFGSLMCRLVMAVDGINQFTSIFCLTVMSVDRYLAVVHPTRSARWRTAPVARMVSAAVWVASAVVVLPVVVFSGVPRGMSTCHMQWPEPAAAWRTAFIIYTAALGFFGPLLVICLCYLLIVVKVRSTTRRVRAPSCQWVQAPACQRRRRSERRVTRMVVAVVALFVLCWMPFYLLNIVNVVCPLPEEPAFFGLYFLVVALPYANSCANPILYGFLSYRFKQGFRRILLRPSRRVRSQEPGSGPPEKTEEEEDEEEEERREEEERRMQRGQEMNGRLSQIAQPGPSGQQQRPCTGTAKEQQLLPQEATAGDKASTLSHL</sequence>
<organism>
    <name type="scientific">Rattus norvegicus</name>
    <name type="common">Rat</name>
    <dbReference type="NCBI Taxonomy" id="10116"/>
    <lineage>
        <taxon>Eukaryota</taxon>
        <taxon>Metazoa</taxon>
        <taxon>Chordata</taxon>
        <taxon>Craniata</taxon>
        <taxon>Vertebrata</taxon>
        <taxon>Euteleostomi</taxon>
        <taxon>Mammalia</taxon>
        <taxon>Eutheria</taxon>
        <taxon>Euarchontoglires</taxon>
        <taxon>Glires</taxon>
        <taxon>Rodentia</taxon>
        <taxon>Myomorpha</taxon>
        <taxon>Muroidea</taxon>
        <taxon>Muridae</taxon>
        <taxon>Murinae</taxon>
        <taxon>Rattus</taxon>
    </lineage>
</organism>
<evidence type="ECO:0000255" key="1"/>
<evidence type="ECO:0000255" key="2">
    <source>
        <dbReference type="PROSITE-ProRule" id="PRU00521"/>
    </source>
</evidence>
<evidence type="ECO:0000256" key="3">
    <source>
        <dbReference type="SAM" id="MobiDB-lite"/>
    </source>
</evidence>
<evidence type="ECO:0000269" key="4">
    <source>
    </source>
</evidence>
<evidence type="ECO:0000269" key="5">
    <source>
    </source>
</evidence>
<evidence type="ECO:0000269" key="6">
    <source>
    </source>
</evidence>
<evidence type="ECO:0000305" key="7">
    <source>
    </source>
</evidence>
<name>SSR3_RAT</name>
<keyword id="KW-1003">Cell membrane</keyword>
<keyword id="KW-1015">Disulfide bond</keyword>
<keyword id="KW-0297">G-protein coupled receptor</keyword>
<keyword id="KW-0325">Glycoprotein</keyword>
<keyword id="KW-0472">Membrane</keyword>
<keyword id="KW-0597">Phosphoprotein</keyword>
<keyword id="KW-0675">Receptor</keyword>
<keyword id="KW-1185">Reference proteome</keyword>
<keyword id="KW-0807">Transducer</keyword>
<keyword id="KW-0812">Transmembrane</keyword>
<keyword id="KW-1133">Transmembrane helix</keyword>
<reference key="1">
    <citation type="journal article" date="1992" name="Proc. Natl. Acad. Sci. U.S.A.">
        <title>Molecular cloning of a somatostatin-28 receptor and comparison of its expression pattern with that of a somatostatin-14 receptor in rat brain.</title>
        <authorList>
            <person name="Meyerhof W."/>
            <person name="Wulfsen I."/>
            <person name="Schoenrock C."/>
            <person name="Fehr S."/>
            <person name="Richter D."/>
        </authorList>
    </citation>
    <scope>NUCLEOTIDE SEQUENCE [MRNA]</scope>
    <scope>FUNCTION</scope>
    <scope>TISSUE SPECIFICITY</scope>
    <source>
        <strain>Wistar</strain>
        <tissue>Brain</tissue>
    </source>
</reference>
<reference key="2">
    <citation type="journal article" date="1997" name="J. Biol. Chem.">
        <title>Phosphorylation of four amino acid residues in the carboxyl terminus of the rat somatostatin receptor subtype 3 is crucial for its desensitization and internalization.</title>
        <authorList>
            <person name="Roth A."/>
            <person name="Kreienkamp H.-J."/>
            <person name="Meyerhof W."/>
            <person name="Richter D."/>
        </authorList>
    </citation>
    <scope>SUBCELLULAR LOCATION</scope>
    <scope>MUTAGENESIS OF SER-341; SER-346; SER-351 AND THR-357</scope>
    <scope>PHOSPHORYLATION AT SER-341; SER-346; SER-351 AND THR-357</scope>
</reference>
<reference key="3">
    <citation type="journal article" date="2001" name="J. Biol. Chem.">
        <title>Homo- and heterodimerization of somatostatin receptor subtypes. Inactivation of sst(3) receptor function by heterodimerization with sst(2A).</title>
        <authorList>
            <person name="Pfeiffer M."/>
            <person name="Koch T."/>
            <person name="Schroder H."/>
            <person name="Klutzny M."/>
            <person name="Kirscht S."/>
            <person name="Kreienkamp H.J."/>
            <person name="Hollt V."/>
            <person name="Schulz S."/>
        </authorList>
    </citation>
    <scope>FUNCTION</scope>
    <scope>SUBUNIT</scope>
    <scope>SUBCELLULAR LOCATION</scope>
</reference>
<accession>P30936</accession>